<keyword id="KW-0025">Alternative splicing</keyword>
<keyword id="KW-1015">Disulfide bond</keyword>
<keyword id="KW-0325">Glycoprotein</keyword>
<keyword id="KW-0328">Glycosyltransferase</keyword>
<keyword id="KW-0333">Golgi apparatus</keyword>
<keyword id="KW-0430">Lectin</keyword>
<keyword id="KW-0464">Manganese</keyword>
<keyword id="KW-0472">Membrane</keyword>
<keyword id="KW-0479">Metal-binding</keyword>
<keyword id="KW-0597">Phosphoprotein</keyword>
<keyword id="KW-0654">Proteoglycan</keyword>
<keyword id="KW-1185">Reference proteome</keyword>
<keyword id="KW-0964">Secreted</keyword>
<keyword id="KW-0735">Signal-anchor</keyword>
<keyword id="KW-0808">Transferase</keyword>
<keyword id="KW-0812">Transmembrane</keyword>
<keyword id="KW-1133">Transmembrane helix</keyword>
<accession>Q6PB93</accession>
<accession>Q7TSI5</accession>
<accession>Q8BL27</accession>
<accession>Q922K5</accession>
<accession>Q99ME1</accession>
<name>GALT2_MOUSE</name>
<sequence>MRRRSRMLLCFALLWVLGIAYYMYSGGGSALAAGGGGAGRKGDWNDIDSIKKKDLHHSRGDEKAQGVETLPPGKVRWPDFNQEAYVGGTMVRSGQDPYARNKFNQVESDKLHMDRGIPDTRHDQCQRKQWRVDLPATSVVITFHNEARSALLRTVVSVLKRSPPHLIKEIILVDDYSNDPEDGALLGKIEKVRVLRNDRREGLMRSRVRGADAAQAKVLTFLDSHCECNERWLEPLLERVAEDRTRVVSPIIDVINMDNFQYVGASADLKGGFDWNLVFKWDYMTPEQRRSRQGNPVAPIKTPMIAGGLFVMDKLYFEELGKYDMMMDVWGGENLEISFRVWQCGGSLEIIPCSRVGHVFRKQHPYTFPGGSGTVFARNTRRAAEVWMDEYKHFYYAAVPSARNVPYGNIQSRLELRKKLGCKPFKWYLDNVYPELRVPDHQDIAFGALQQGTNCLDTLGHFADGVVGIYECHNAGGNQEWALTKEKSVKHMDLCLTVVDRSPGSLIRLQGCRENDSRQKWEQIEGNSKLRHVGSNLCLDSRTAKSGGLSVEVCGPALSQQWKFSLNLQQ</sequence>
<reference key="1">
    <citation type="submission" date="2001-02" db="EMBL/GenBank/DDBJ databases">
        <authorList>
            <person name="Miyahara N."/>
            <person name="Kanoh A."/>
            <person name="Irimura T."/>
        </authorList>
    </citation>
    <scope>NUCLEOTIDE SEQUENCE [MRNA] (ISOFORM 1)</scope>
    <source>
        <tissue>Colon adenocarcinoma</tissue>
    </source>
</reference>
<reference key="2">
    <citation type="journal article" date="2005" name="Science">
        <title>The transcriptional landscape of the mammalian genome.</title>
        <authorList>
            <person name="Carninci P."/>
            <person name="Kasukawa T."/>
            <person name="Katayama S."/>
            <person name="Gough J."/>
            <person name="Frith M.C."/>
            <person name="Maeda N."/>
            <person name="Oyama R."/>
            <person name="Ravasi T."/>
            <person name="Lenhard B."/>
            <person name="Wells C."/>
            <person name="Kodzius R."/>
            <person name="Shimokawa K."/>
            <person name="Bajic V.B."/>
            <person name="Brenner S.E."/>
            <person name="Batalov S."/>
            <person name="Forrest A.R."/>
            <person name="Zavolan M."/>
            <person name="Davis M.J."/>
            <person name="Wilming L.G."/>
            <person name="Aidinis V."/>
            <person name="Allen J.E."/>
            <person name="Ambesi-Impiombato A."/>
            <person name="Apweiler R."/>
            <person name="Aturaliya R.N."/>
            <person name="Bailey T.L."/>
            <person name="Bansal M."/>
            <person name="Baxter L."/>
            <person name="Beisel K.W."/>
            <person name="Bersano T."/>
            <person name="Bono H."/>
            <person name="Chalk A.M."/>
            <person name="Chiu K.P."/>
            <person name="Choudhary V."/>
            <person name="Christoffels A."/>
            <person name="Clutterbuck D.R."/>
            <person name="Crowe M.L."/>
            <person name="Dalla E."/>
            <person name="Dalrymple B.P."/>
            <person name="de Bono B."/>
            <person name="Della Gatta G."/>
            <person name="di Bernardo D."/>
            <person name="Down T."/>
            <person name="Engstrom P."/>
            <person name="Fagiolini M."/>
            <person name="Faulkner G."/>
            <person name="Fletcher C.F."/>
            <person name="Fukushima T."/>
            <person name="Furuno M."/>
            <person name="Futaki S."/>
            <person name="Gariboldi M."/>
            <person name="Georgii-Hemming P."/>
            <person name="Gingeras T.R."/>
            <person name="Gojobori T."/>
            <person name="Green R.E."/>
            <person name="Gustincich S."/>
            <person name="Harbers M."/>
            <person name="Hayashi Y."/>
            <person name="Hensch T.K."/>
            <person name="Hirokawa N."/>
            <person name="Hill D."/>
            <person name="Huminiecki L."/>
            <person name="Iacono M."/>
            <person name="Ikeo K."/>
            <person name="Iwama A."/>
            <person name="Ishikawa T."/>
            <person name="Jakt M."/>
            <person name="Kanapin A."/>
            <person name="Katoh M."/>
            <person name="Kawasawa Y."/>
            <person name="Kelso J."/>
            <person name="Kitamura H."/>
            <person name="Kitano H."/>
            <person name="Kollias G."/>
            <person name="Krishnan S.P."/>
            <person name="Kruger A."/>
            <person name="Kummerfeld S.K."/>
            <person name="Kurochkin I.V."/>
            <person name="Lareau L.F."/>
            <person name="Lazarevic D."/>
            <person name="Lipovich L."/>
            <person name="Liu J."/>
            <person name="Liuni S."/>
            <person name="McWilliam S."/>
            <person name="Madan Babu M."/>
            <person name="Madera M."/>
            <person name="Marchionni L."/>
            <person name="Matsuda H."/>
            <person name="Matsuzawa S."/>
            <person name="Miki H."/>
            <person name="Mignone F."/>
            <person name="Miyake S."/>
            <person name="Morris K."/>
            <person name="Mottagui-Tabar S."/>
            <person name="Mulder N."/>
            <person name="Nakano N."/>
            <person name="Nakauchi H."/>
            <person name="Ng P."/>
            <person name="Nilsson R."/>
            <person name="Nishiguchi S."/>
            <person name="Nishikawa S."/>
            <person name="Nori F."/>
            <person name="Ohara O."/>
            <person name="Okazaki Y."/>
            <person name="Orlando V."/>
            <person name="Pang K.C."/>
            <person name="Pavan W.J."/>
            <person name="Pavesi G."/>
            <person name="Pesole G."/>
            <person name="Petrovsky N."/>
            <person name="Piazza S."/>
            <person name="Reed J."/>
            <person name="Reid J.F."/>
            <person name="Ring B.Z."/>
            <person name="Ringwald M."/>
            <person name="Rost B."/>
            <person name="Ruan Y."/>
            <person name="Salzberg S.L."/>
            <person name="Sandelin A."/>
            <person name="Schneider C."/>
            <person name="Schoenbach C."/>
            <person name="Sekiguchi K."/>
            <person name="Semple C.A."/>
            <person name="Seno S."/>
            <person name="Sessa L."/>
            <person name="Sheng Y."/>
            <person name="Shibata Y."/>
            <person name="Shimada H."/>
            <person name="Shimada K."/>
            <person name="Silva D."/>
            <person name="Sinclair B."/>
            <person name="Sperling S."/>
            <person name="Stupka E."/>
            <person name="Sugiura K."/>
            <person name="Sultana R."/>
            <person name="Takenaka Y."/>
            <person name="Taki K."/>
            <person name="Tammoja K."/>
            <person name="Tan S.L."/>
            <person name="Tang S."/>
            <person name="Taylor M.S."/>
            <person name="Tegner J."/>
            <person name="Teichmann S.A."/>
            <person name="Ueda H.R."/>
            <person name="van Nimwegen E."/>
            <person name="Verardo R."/>
            <person name="Wei C.L."/>
            <person name="Yagi K."/>
            <person name="Yamanishi H."/>
            <person name="Zabarovsky E."/>
            <person name="Zhu S."/>
            <person name="Zimmer A."/>
            <person name="Hide W."/>
            <person name="Bult C."/>
            <person name="Grimmond S.M."/>
            <person name="Teasdale R.D."/>
            <person name="Liu E.T."/>
            <person name="Brusic V."/>
            <person name="Quackenbush J."/>
            <person name="Wahlestedt C."/>
            <person name="Mattick J.S."/>
            <person name="Hume D.A."/>
            <person name="Kai C."/>
            <person name="Sasaki D."/>
            <person name="Tomaru Y."/>
            <person name="Fukuda S."/>
            <person name="Kanamori-Katayama M."/>
            <person name="Suzuki M."/>
            <person name="Aoki J."/>
            <person name="Arakawa T."/>
            <person name="Iida J."/>
            <person name="Imamura K."/>
            <person name="Itoh M."/>
            <person name="Kato T."/>
            <person name="Kawaji H."/>
            <person name="Kawagashira N."/>
            <person name="Kawashima T."/>
            <person name="Kojima M."/>
            <person name="Kondo S."/>
            <person name="Konno H."/>
            <person name="Nakano K."/>
            <person name="Ninomiya N."/>
            <person name="Nishio T."/>
            <person name="Okada M."/>
            <person name="Plessy C."/>
            <person name="Shibata K."/>
            <person name="Shiraki T."/>
            <person name="Suzuki S."/>
            <person name="Tagami M."/>
            <person name="Waki K."/>
            <person name="Watahiki A."/>
            <person name="Okamura-Oho Y."/>
            <person name="Suzuki H."/>
            <person name="Kawai J."/>
            <person name="Hayashizaki Y."/>
        </authorList>
    </citation>
    <scope>NUCLEOTIDE SEQUENCE [LARGE SCALE MRNA] (ISOFORM 1)</scope>
    <source>
        <strain>C57BL/6J</strain>
        <tissue>Adipose tissue</tissue>
    </source>
</reference>
<reference key="3">
    <citation type="journal article" date="2004" name="Genome Res.">
        <title>The status, quality, and expansion of the NIH full-length cDNA project: the Mammalian Gene Collection (MGC).</title>
        <authorList>
            <consortium name="The MGC Project Team"/>
        </authorList>
    </citation>
    <scope>NUCLEOTIDE SEQUENCE [LARGE SCALE MRNA] (ISOFORMS 1 AND 2)</scope>
    <source>
        <strain>C57BL/6J</strain>
        <strain>Czech II</strain>
        <tissue>Brain</tissue>
        <tissue>Mammary tumor</tissue>
    </source>
</reference>
<reference key="4">
    <citation type="journal article" date="2003" name="Glycobiology">
        <title>Expression of UDP-GalNAc:polypeptide N-acetylgalactosaminyltransferase isoforms in murine tissues determined by real-time PCR: a new view of a large family.</title>
        <authorList>
            <person name="Young W.W. Jr."/>
            <person name="Holcomb D.R."/>
            <person name="Ten Hagen K.G."/>
            <person name="Tabak L.A."/>
        </authorList>
    </citation>
    <scope>TISSUE SPECIFICITY</scope>
</reference>
<reference key="5">
    <citation type="journal article" date="2010" name="Cell">
        <title>A tissue-specific atlas of mouse protein phosphorylation and expression.</title>
        <authorList>
            <person name="Huttlin E.L."/>
            <person name="Jedrychowski M.P."/>
            <person name="Elias J.E."/>
            <person name="Goswami T."/>
            <person name="Rad R."/>
            <person name="Beausoleil S.A."/>
            <person name="Villen J."/>
            <person name="Haas W."/>
            <person name="Sowa M.E."/>
            <person name="Gygi S.P."/>
        </authorList>
    </citation>
    <scope>IDENTIFICATION BY MASS SPECTROMETRY [LARGE SCALE ANALYSIS]</scope>
    <source>
        <tissue>Brown adipose tissue</tissue>
        <tissue>Heart</tissue>
        <tissue>Kidney</tissue>
        <tissue>Liver</tissue>
        <tissue>Lung</tissue>
        <tissue>Pancreas</tissue>
        <tissue>Spleen</tissue>
    </source>
</reference>
<reference key="6">
    <citation type="journal article" date="2016" name="Cell Metab.">
        <title>Loss of function of GALNT2 lowers high-density lipoproteins in humans, nonhuman primates, and rodents.</title>
        <authorList>
            <consortium name="Myocardial Infarction Exome Sequencing Study"/>
            <person name="Khetarpal S.A."/>
            <person name="Schjoldager K.T."/>
            <person name="Christoffersen C."/>
            <person name="Raghavan A."/>
            <person name="Edmondson A.C."/>
            <person name="Reutter H.M."/>
            <person name="Ahmed B."/>
            <person name="Ouazzani R."/>
            <person name="Peloso G.M."/>
            <person name="Vitali C."/>
            <person name="Zhao W."/>
            <person name="Somasundara A.V."/>
            <person name="Millar J.S."/>
            <person name="Park Y."/>
            <person name="Fernando G."/>
            <person name="Livanov V."/>
            <person name="Choi S."/>
            <person name="Noe E."/>
            <person name="Patel P."/>
            <person name="Ho S.P."/>
            <person name="Kirchgessner T.G."/>
            <person name="Wandall H.H."/>
            <person name="Hansen L."/>
            <person name="Bennett E.P."/>
            <person name="Vakhrushev S.Y."/>
            <person name="Saleheen D."/>
            <person name="Kathiresan S."/>
            <person name="Brown C.D."/>
            <person name="Abou Jamra R."/>
            <person name="LeGuern E."/>
            <person name="Clausen H."/>
            <person name="Rader D.J."/>
        </authorList>
    </citation>
    <scope>DISRUPTION PHENOTYPE</scope>
    <scope>FUNCTION</scope>
</reference>
<reference key="7">
    <citation type="journal article" date="2020" name="Brain">
        <title>Novel congenital disorder of O-linked glycosylation caused by GALNT2 loss of function.</title>
        <authorList>
            <person name="Zilmer M."/>
            <person name="Edmondson A.C."/>
            <person name="Khetarpal S.A."/>
            <person name="Alesi V."/>
            <person name="Zaki M.S."/>
            <person name="Rostasy K."/>
            <person name="Madsen C.G."/>
            <person name="Lepri F.R."/>
            <person name="Sinibaldi L."/>
            <person name="Cusmai R."/>
            <person name="Novelli A."/>
            <person name="Issa M.Y."/>
            <person name="Fenger C.D."/>
            <person name="Abou Jamra R."/>
            <person name="Reutter H."/>
            <person name="Briuglia S."/>
            <person name="Agolini E."/>
            <person name="Hansen L."/>
            <person name="Petaejae-Repo U.E."/>
            <person name="Hintze J."/>
            <person name="Raymond K.M."/>
            <person name="Liedtke K."/>
            <person name="Stanley V."/>
            <person name="Musaev D."/>
            <person name="Gleeson J.G."/>
            <person name="Vitali C."/>
            <person name="O'Brien W.T."/>
            <person name="Gardella E."/>
            <person name="Rubboli G."/>
            <person name="Rader D.J."/>
            <person name="Schjoldager K.T."/>
            <person name="Moeller R.S."/>
        </authorList>
    </citation>
    <scope>DISRUPTION PHENOTYPE</scope>
</reference>
<protein>
    <recommendedName>
        <fullName>Polypeptide N-acetylgalactosaminyltransferase 2</fullName>
        <ecNumber>2.4.1.41</ecNumber>
    </recommendedName>
    <alternativeName>
        <fullName>Polypeptide GalNAc transferase 2</fullName>
        <shortName>GalNAc-T2</shortName>
        <shortName>pp-GaNTase 2</shortName>
    </alternativeName>
    <alternativeName>
        <fullName>Protein-UDP acetylgalactosaminyltransferase 2</fullName>
    </alternativeName>
    <alternativeName>
        <fullName>UDP-GalNAc:polypeptide N-acetylgalactosaminyltransferase 2</fullName>
    </alternativeName>
    <component>
        <recommendedName>
            <fullName>Polypeptide N-acetylgalactosaminyltransferase 2 soluble form</fullName>
        </recommendedName>
    </component>
</protein>
<gene>
    <name type="primary">Galnt2</name>
</gene>
<comment type="function">
    <text evidence="1 6">Catalyzes the initial reaction in O-linked oligosaccharide biosynthesis, the transfer of an N-acetyl-D-galactosamine residue to a serine or threonine residue on the protein receptor. Has a broad spectrum of substrates for peptides such as EA2, Muc5AC, Muc1a, Muc1b. Probably involved in O-linked glycosylation of the immunoglobulin A1 (IgA1) hinge region (By similarity). Involved in O-linked glycosylation of APOC-III, ANGPTL3 and PLTP. It participates in the regulation of HDL-C metabolism (PubMed:27508872).</text>
</comment>
<comment type="catalytic activity">
    <reaction>
        <text>L-seryl-[protein] + UDP-N-acetyl-alpha-D-galactosamine = a 3-O-[N-acetyl-alpha-D-galactosaminyl]-L-seryl-[protein] + UDP + H(+)</text>
        <dbReference type="Rhea" id="RHEA:23956"/>
        <dbReference type="Rhea" id="RHEA-COMP:9863"/>
        <dbReference type="Rhea" id="RHEA-COMP:12788"/>
        <dbReference type="ChEBI" id="CHEBI:15378"/>
        <dbReference type="ChEBI" id="CHEBI:29999"/>
        <dbReference type="ChEBI" id="CHEBI:53604"/>
        <dbReference type="ChEBI" id="CHEBI:58223"/>
        <dbReference type="ChEBI" id="CHEBI:67138"/>
        <dbReference type="EC" id="2.4.1.41"/>
    </reaction>
</comment>
<comment type="catalytic activity">
    <reaction>
        <text>L-threonyl-[protein] + UDP-N-acetyl-alpha-D-galactosamine = a 3-O-[N-acetyl-alpha-D-galactosaminyl]-L-threonyl-[protein] + UDP + H(+)</text>
        <dbReference type="Rhea" id="RHEA:52424"/>
        <dbReference type="Rhea" id="RHEA-COMP:11060"/>
        <dbReference type="Rhea" id="RHEA-COMP:11689"/>
        <dbReference type="ChEBI" id="CHEBI:15378"/>
        <dbReference type="ChEBI" id="CHEBI:30013"/>
        <dbReference type="ChEBI" id="CHEBI:58223"/>
        <dbReference type="ChEBI" id="CHEBI:67138"/>
        <dbReference type="ChEBI" id="CHEBI:87075"/>
        <dbReference type="EC" id="2.4.1.41"/>
    </reaction>
</comment>
<comment type="cofactor">
    <cofactor evidence="1">
        <name>Mn(2+)</name>
        <dbReference type="ChEBI" id="CHEBI:29035"/>
    </cofactor>
</comment>
<comment type="pathway">
    <text>Protein modification; protein glycosylation.</text>
</comment>
<comment type="subcellular location">
    <subcellularLocation>
        <location>Golgi apparatus</location>
        <location>Golgi stack membrane</location>
        <topology>Single-pass type II membrane protein</topology>
    </subcellularLocation>
    <subcellularLocation>
        <location evidence="2">Secreted</location>
    </subcellularLocation>
    <text>Resides preferentially in the trans and medial parts of the Golgi stack. A secreted form also exists.</text>
</comment>
<comment type="alternative products">
    <event type="alternative splicing"/>
    <isoform>
        <id>Q6PB93-1</id>
        <name>1</name>
        <sequence type="displayed"/>
    </isoform>
    <isoform>
        <id>Q6PB93-2</id>
        <name>2</name>
        <sequence type="described" ref="VSP_011201"/>
    </isoform>
</comment>
<comment type="tissue specificity">
    <text evidence="5">Widely expressed at high level.</text>
</comment>
<comment type="domain">
    <text evidence="1">There are two conserved domains in the glycosyltransferase region: the N-terminal domain (domain A, also called GT1 motif), which is probably involved in manganese coordination and substrate binding and the C-terminal domain (domain B, also called Gal/GalNAc-T motif), which is probably involved in catalytic reaction and UDP-Gal binding.</text>
</comment>
<comment type="domain">
    <text evidence="1">The ricin B-type lectin domain binds to GalNAc and contributes to the glycopeptide specificity.</text>
</comment>
<comment type="disruption phenotype">
    <text evidence="6 7">GALNT2 knockout results in significant embryonic lethality. Surviving mice show decreased body weight, abnormal craniofacial features, and neuro-behavioral abnormalities, including deficits in coordination and impaired responses to acoustic stimuli (PubMed:32293671). Knockout mice have reduced HDL-C levels compared to wild-type littermate (PubMed:27508872).</text>
</comment>
<comment type="similarity">
    <text evidence="9">Belongs to the glycosyltransferase 2 family. GalNAc-T subfamily.</text>
</comment>
<comment type="online information" name="Functional Glycomics Gateway - GTase">
    <link uri="http://www.functionalglycomics.org/glycomics/molecule/jsp/glycoEnzyme/viewGlycoEnzyme.jsp?gbpId=gt_mou_511"/>
    <text>Polypeptide N-acetylgalactosaminyltransferase 2</text>
</comment>
<dbReference type="EC" id="2.4.1.41"/>
<dbReference type="EMBL" id="AF348968">
    <property type="protein sequence ID" value="AAK37548.1"/>
    <property type="molecule type" value="mRNA"/>
</dbReference>
<dbReference type="EMBL" id="AK046567">
    <property type="protein sequence ID" value="BAC32790.1"/>
    <property type="molecule type" value="mRNA"/>
</dbReference>
<dbReference type="EMBL" id="BC007172">
    <property type="protein sequence ID" value="AAH07172.1"/>
    <property type="molecule type" value="mRNA"/>
</dbReference>
<dbReference type="EMBL" id="BC053063">
    <property type="protein sequence ID" value="AAH53063.1"/>
    <property type="molecule type" value="mRNA"/>
</dbReference>
<dbReference type="EMBL" id="BC059818">
    <property type="protein sequence ID" value="AAH59818.1"/>
    <property type="molecule type" value="mRNA"/>
</dbReference>
<dbReference type="CCDS" id="CCDS22769.1">
    <molecule id="Q6PB93-1"/>
</dbReference>
<dbReference type="RefSeq" id="NP_644678.2">
    <molecule id="Q6PB93-1"/>
    <property type="nucleotide sequence ID" value="NM_139272.2"/>
</dbReference>
<dbReference type="SMR" id="Q6PB93"/>
<dbReference type="BioGRID" id="223865">
    <property type="interactions" value="3"/>
</dbReference>
<dbReference type="FunCoup" id="Q6PB93">
    <property type="interactions" value="1330"/>
</dbReference>
<dbReference type="STRING" id="10090.ENSMUSP00000034458"/>
<dbReference type="CAZy" id="CBM13">
    <property type="family name" value="Carbohydrate-Binding Module Family 13"/>
</dbReference>
<dbReference type="CAZy" id="GT27">
    <property type="family name" value="Glycosyltransferase Family 27"/>
</dbReference>
<dbReference type="GlyCosmos" id="Q6PB93">
    <property type="glycosylation" value="1 site, No reported glycans"/>
</dbReference>
<dbReference type="GlyGen" id="Q6PB93">
    <property type="glycosylation" value="2 sites"/>
</dbReference>
<dbReference type="PhosphoSitePlus" id="Q6PB93"/>
<dbReference type="SwissPalm" id="Q6PB93"/>
<dbReference type="jPOST" id="Q6PB93"/>
<dbReference type="PaxDb" id="10090-ENSMUSP00000034458"/>
<dbReference type="PeptideAtlas" id="Q6PB93"/>
<dbReference type="ProteomicsDB" id="267419">
    <molecule id="Q6PB93-1"/>
</dbReference>
<dbReference type="ProteomicsDB" id="267420">
    <molecule id="Q6PB93-2"/>
</dbReference>
<dbReference type="Pumba" id="Q6PB93"/>
<dbReference type="DNASU" id="108148"/>
<dbReference type="Ensembl" id="ENSMUST00000034458.9">
    <molecule id="Q6PB93-1"/>
    <property type="protein sequence ID" value="ENSMUSP00000034458.9"/>
    <property type="gene ID" value="ENSMUSG00000089704.10"/>
</dbReference>
<dbReference type="GeneID" id="108148"/>
<dbReference type="KEGG" id="mmu:108148"/>
<dbReference type="UCSC" id="uc009nwz.2">
    <molecule id="Q6PB93-1"/>
    <property type="organism name" value="mouse"/>
</dbReference>
<dbReference type="AGR" id="MGI:894694"/>
<dbReference type="CTD" id="2590"/>
<dbReference type="MGI" id="MGI:894694">
    <property type="gene designation" value="Galnt2"/>
</dbReference>
<dbReference type="VEuPathDB" id="HostDB:ENSMUSG00000089704"/>
<dbReference type="VEuPathDB" id="HostDB:ENSMUSG00000092329"/>
<dbReference type="eggNOG" id="KOG3738">
    <property type="taxonomic scope" value="Eukaryota"/>
</dbReference>
<dbReference type="GeneTree" id="ENSGT00940000156958"/>
<dbReference type="HOGENOM" id="CLU_013477_0_2_1"/>
<dbReference type="InParanoid" id="Q6PB93"/>
<dbReference type="OMA" id="NVPMGSI"/>
<dbReference type="OrthoDB" id="429263at2759"/>
<dbReference type="PhylomeDB" id="Q6PB93"/>
<dbReference type="TreeFam" id="TF313267"/>
<dbReference type="Reactome" id="R-MMU-6811436">
    <property type="pathway name" value="COPI-independent Golgi-to-ER retrograde traffic"/>
</dbReference>
<dbReference type="Reactome" id="R-MMU-913709">
    <property type="pathway name" value="O-linked glycosylation of mucins"/>
</dbReference>
<dbReference type="UniPathway" id="UPA00378"/>
<dbReference type="BioGRID-ORCS" id="108148">
    <property type="hits" value="2 hits in 75 CRISPR screens"/>
</dbReference>
<dbReference type="ChiTaRS" id="Galnt2">
    <property type="organism name" value="mouse"/>
</dbReference>
<dbReference type="PRO" id="PR:Q6PB93"/>
<dbReference type="Proteomes" id="UP000000589">
    <property type="component" value="Chromosome 8"/>
</dbReference>
<dbReference type="RNAct" id="Q6PB93">
    <property type="molecule type" value="protein"/>
</dbReference>
<dbReference type="Bgee" id="ENSMUSG00000089704">
    <property type="expression patterns" value="Expressed in embryonic brain and 76 other cell types or tissues"/>
</dbReference>
<dbReference type="GO" id="GO:0005576">
    <property type="term" value="C:extracellular region"/>
    <property type="evidence" value="ECO:0007669"/>
    <property type="project" value="UniProtKB-SubCell"/>
</dbReference>
<dbReference type="GO" id="GO:0032580">
    <property type="term" value="C:Golgi cisterna membrane"/>
    <property type="evidence" value="ECO:0007669"/>
    <property type="project" value="UniProtKB-SubCell"/>
</dbReference>
<dbReference type="GO" id="GO:0005796">
    <property type="term" value="C:Golgi lumen"/>
    <property type="evidence" value="ECO:0000304"/>
    <property type="project" value="MGI"/>
</dbReference>
<dbReference type="GO" id="GO:0048471">
    <property type="term" value="C:perinuclear region of cytoplasm"/>
    <property type="evidence" value="ECO:0007669"/>
    <property type="project" value="Ensembl"/>
</dbReference>
<dbReference type="GO" id="GO:0030246">
    <property type="term" value="F:carbohydrate binding"/>
    <property type="evidence" value="ECO:0007669"/>
    <property type="project" value="UniProtKB-KW"/>
</dbReference>
<dbReference type="GO" id="GO:0030145">
    <property type="term" value="F:manganese ion binding"/>
    <property type="evidence" value="ECO:0000250"/>
    <property type="project" value="UniProtKB"/>
</dbReference>
<dbReference type="GO" id="GO:0004653">
    <property type="term" value="F:polypeptide N-acetylgalactosaminyltransferase activity"/>
    <property type="evidence" value="ECO:0000250"/>
    <property type="project" value="UniProtKB"/>
</dbReference>
<dbReference type="GO" id="GO:0016266">
    <property type="term" value="P:O-glycan processing"/>
    <property type="evidence" value="ECO:0007669"/>
    <property type="project" value="Ensembl"/>
</dbReference>
<dbReference type="GO" id="GO:0002639">
    <property type="term" value="P:positive regulation of immunoglobulin production"/>
    <property type="evidence" value="ECO:0007669"/>
    <property type="project" value="Ensembl"/>
</dbReference>
<dbReference type="GO" id="GO:0051604">
    <property type="term" value="P:protein maturation"/>
    <property type="evidence" value="ECO:0007669"/>
    <property type="project" value="Ensembl"/>
</dbReference>
<dbReference type="GO" id="GO:0006493">
    <property type="term" value="P:protein O-linked glycosylation"/>
    <property type="evidence" value="ECO:0000250"/>
    <property type="project" value="UniProtKB"/>
</dbReference>
<dbReference type="GO" id="GO:0018242">
    <property type="term" value="P:protein O-linked glycosylation via serine"/>
    <property type="evidence" value="ECO:0007669"/>
    <property type="project" value="Ensembl"/>
</dbReference>
<dbReference type="GO" id="GO:0018243">
    <property type="term" value="P:protein O-linked glycosylation via threonine"/>
    <property type="evidence" value="ECO:0007669"/>
    <property type="project" value="Ensembl"/>
</dbReference>
<dbReference type="CDD" id="cd23434">
    <property type="entry name" value="beta-trefoil_Ricin_GALNT2"/>
    <property type="match status" value="1"/>
</dbReference>
<dbReference type="CDD" id="cd02510">
    <property type="entry name" value="pp-GalNAc-T"/>
    <property type="match status" value="1"/>
</dbReference>
<dbReference type="FunFam" id="2.80.10.50:FF:000018">
    <property type="entry name" value="Polypeptide N-acetylgalactosaminyltransferase"/>
    <property type="match status" value="1"/>
</dbReference>
<dbReference type="FunFam" id="3.90.550.10:FF:000026">
    <property type="entry name" value="Polypeptide N-acetylgalactosaminyltransferase"/>
    <property type="match status" value="1"/>
</dbReference>
<dbReference type="Gene3D" id="2.80.10.50">
    <property type="match status" value="1"/>
</dbReference>
<dbReference type="Gene3D" id="3.90.550.10">
    <property type="entry name" value="Spore Coat Polysaccharide Biosynthesis Protein SpsA, Chain A"/>
    <property type="match status" value="1"/>
</dbReference>
<dbReference type="InterPro" id="IPR045885">
    <property type="entry name" value="GalNAc-T"/>
</dbReference>
<dbReference type="InterPro" id="IPR001173">
    <property type="entry name" value="Glyco_trans_2-like"/>
</dbReference>
<dbReference type="InterPro" id="IPR029044">
    <property type="entry name" value="Nucleotide-diphossugar_trans"/>
</dbReference>
<dbReference type="InterPro" id="IPR035992">
    <property type="entry name" value="Ricin_B-like_lectins"/>
</dbReference>
<dbReference type="InterPro" id="IPR000772">
    <property type="entry name" value="Ricin_B_lectin"/>
</dbReference>
<dbReference type="PANTHER" id="PTHR11675">
    <property type="entry name" value="N-ACETYLGALACTOSAMINYLTRANSFERASE"/>
    <property type="match status" value="1"/>
</dbReference>
<dbReference type="PANTHER" id="PTHR11675:SF49">
    <property type="entry name" value="POLYPEPTIDE N-ACETYLGALACTOSAMINYLTRANSFERASE 2"/>
    <property type="match status" value="1"/>
</dbReference>
<dbReference type="Pfam" id="PF00535">
    <property type="entry name" value="Glycos_transf_2"/>
    <property type="match status" value="1"/>
</dbReference>
<dbReference type="Pfam" id="PF00652">
    <property type="entry name" value="Ricin_B_lectin"/>
    <property type="match status" value="1"/>
</dbReference>
<dbReference type="SMART" id="SM00458">
    <property type="entry name" value="RICIN"/>
    <property type="match status" value="1"/>
</dbReference>
<dbReference type="SUPFAM" id="SSF53448">
    <property type="entry name" value="Nucleotide-diphospho-sugar transferases"/>
    <property type="match status" value="1"/>
</dbReference>
<dbReference type="SUPFAM" id="SSF50370">
    <property type="entry name" value="Ricin B-like lectins"/>
    <property type="match status" value="1"/>
</dbReference>
<dbReference type="PROSITE" id="PS50231">
    <property type="entry name" value="RICIN_B_LECTIN"/>
    <property type="match status" value="1"/>
</dbReference>
<organism>
    <name type="scientific">Mus musculus</name>
    <name type="common">Mouse</name>
    <dbReference type="NCBI Taxonomy" id="10090"/>
    <lineage>
        <taxon>Eukaryota</taxon>
        <taxon>Metazoa</taxon>
        <taxon>Chordata</taxon>
        <taxon>Craniata</taxon>
        <taxon>Vertebrata</taxon>
        <taxon>Euteleostomi</taxon>
        <taxon>Mammalia</taxon>
        <taxon>Eutheria</taxon>
        <taxon>Euarchontoglires</taxon>
        <taxon>Glires</taxon>
        <taxon>Rodentia</taxon>
        <taxon>Myomorpha</taxon>
        <taxon>Muroidea</taxon>
        <taxon>Muridae</taxon>
        <taxon>Murinae</taxon>
        <taxon>Mus</taxon>
        <taxon>Mus</taxon>
    </lineage>
</organism>
<proteinExistence type="evidence at protein level"/>
<feature type="chain" id="PRO_0000223392" description="Polypeptide N-acetylgalactosaminyltransferase 2">
    <location>
        <begin position="1"/>
        <end position="570"/>
    </location>
</feature>
<feature type="chain" id="PRO_0000012267" description="Polypeptide N-acetylgalactosaminyltransferase 2 soluble form">
    <location>
        <begin position="51"/>
        <end position="570"/>
    </location>
</feature>
<feature type="topological domain" description="Cytoplasmic" evidence="3">
    <location>
        <begin position="1"/>
        <end position="6"/>
    </location>
</feature>
<feature type="transmembrane region" description="Helical; Signal-anchor for type II membrane protein" evidence="3">
    <location>
        <begin position="7"/>
        <end position="24"/>
    </location>
</feature>
<feature type="topological domain" description="Lumenal" evidence="3">
    <location>
        <begin position="25"/>
        <end position="570"/>
    </location>
</feature>
<feature type="domain" description="Ricin B-type lectin" evidence="4">
    <location>
        <begin position="442"/>
        <end position="565"/>
    </location>
</feature>
<feature type="region of interest" description="Catalytic subdomain A">
    <location>
        <begin position="134"/>
        <end position="239"/>
    </location>
</feature>
<feature type="region of interest" description="Catalytic subdomain B">
    <location>
        <begin position="299"/>
        <end position="361"/>
    </location>
</feature>
<feature type="binding site" evidence="1">
    <location>
        <position position="142"/>
    </location>
    <ligand>
        <name>substrate</name>
    </ligand>
</feature>
<feature type="binding site" evidence="1">
    <location>
        <position position="175"/>
    </location>
    <ligand>
        <name>substrate</name>
    </ligand>
</feature>
<feature type="binding site" evidence="1">
    <location>
        <position position="200"/>
    </location>
    <ligand>
        <name>substrate</name>
    </ligand>
</feature>
<feature type="binding site" evidence="1">
    <location>
        <position position="223"/>
    </location>
    <ligand>
        <name>Mn(2+)</name>
        <dbReference type="ChEBI" id="CHEBI:29035"/>
    </ligand>
</feature>
<feature type="binding site" evidence="1">
    <location>
        <position position="224"/>
    </location>
    <ligand>
        <name>substrate</name>
    </ligand>
</feature>
<feature type="binding site" evidence="1">
    <location>
        <position position="225"/>
    </location>
    <ligand>
        <name>Mn(2+)</name>
        <dbReference type="ChEBI" id="CHEBI:29035"/>
    </ligand>
</feature>
<feature type="binding site" evidence="1">
    <location>
        <position position="330"/>
    </location>
    <ligand>
        <name>substrate</name>
    </ligand>
</feature>
<feature type="binding site" evidence="1">
    <location>
        <position position="358"/>
    </location>
    <ligand>
        <name>Mn(2+)</name>
        <dbReference type="ChEBI" id="CHEBI:29035"/>
    </ligand>
</feature>
<feature type="binding site" evidence="1">
    <location>
        <position position="361"/>
    </location>
    <ligand>
        <name>substrate</name>
    </ligand>
</feature>
<feature type="binding site" evidence="1">
    <location>
        <position position="364"/>
    </location>
    <ligand>
        <name>substrate</name>
    </ligand>
</feature>
<feature type="binding site" evidence="1">
    <location>
        <position position="366"/>
    </location>
    <ligand>
        <name>substrate</name>
    </ligand>
</feature>
<feature type="modified residue" description="Phosphoserine" evidence="2">
    <location>
        <position position="535"/>
    </location>
</feature>
<feature type="glycosylation site" description="O-linked (Xyl...) (chondroitin sulfate) serine" evidence="2">
    <location>
        <position position="29"/>
    </location>
</feature>
<feature type="glycosylation site" description="N-linked (GlcNAc...) asparagine" evidence="3">
    <location>
        <position position="515"/>
    </location>
</feature>
<feature type="disulfide bond" evidence="4">
    <location>
        <begin position="125"/>
        <end position="353"/>
    </location>
</feature>
<feature type="disulfide bond" evidence="4">
    <location>
        <begin position="344"/>
        <end position="422"/>
    </location>
</feature>
<feature type="disulfide bond" evidence="4">
    <location>
        <begin position="455"/>
        <end position="472"/>
    </location>
</feature>
<feature type="disulfide bond" evidence="4">
    <location>
        <begin position="495"/>
        <end position="512"/>
    </location>
</feature>
<feature type="disulfide bond" evidence="4">
    <location>
        <begin position="538"/>
        <end position="554"/>
    </location>
</feature>
<feature type="splice variant" id="VSP_011201" description="In isoform 2." evidence="8">
    <original>MRRRSRMLLCFALLWVLGIAYYMYSGGGSALAAGGGGAGRK</original>
    <variation>MALHNPQ</variation>
    <location>
        <begin position="1"/>
        <end position="41"/>
    </location>
</feature>
<feature type="sequence conflict" description="In Ref. 1; AAK37548." evidence="9" ref="1">
    <original>R</original>
    <variation>L</variation>
    <location>
        <position position="2"/>
    </location>
</feature>
<feature type="sequence conflict" description="In Ref. 2; BAC32790." evidence="9" ref="2">
    <original>C</original>
    <variation>Y</variation>
    <location>
        <position position="226"/>
    </location>
</feature>
<feature type="sequence conflict" description="In Ref. 1; AAK37548." evidence="9" ref="1">
    <original>DSR</original>
    <variation>NSK</variation>
    <location>
        <begin position="516"/>
        <end position="518"/>
    </location>
</feature>
<feature type="sequence conflict" description="In Ref. 1; AAK37548." evidence="9" ref="1">
    <original>F</original>
    <variation>V</variation>
    <location>
        <position position="564"/>
    </location>
</feature>
<evidence type="ECO:0000250" key="1"/>
<evidence type="ECO:0000250" key="2">
    <source>
        <dbReference type="UniProtKB" id="Q10471"/>
    </source>
</evidence>
<evidence type="ECO:0000255" key="3"/>
<evidence type="ECO:0000255" key="4">
    <source>
        <dbReference type="PROSITE-ProRule" id="PRU00174"/>
    </source>
</evidence>
<evidence type="ECO:0000269" key="5">
    <source>
    </source>
</evidence>
<evidence type="ECO:0000269" key="6">
    <source>
    </source>
</evidence>
<evidence type="ECO:0000269" key="7">
    <source>
    </source>
</evidence>
<evidence type="ECO:0000303" key="8">
    <source>
    </source>
</evidence>
<evidence type="ECO:0000305" key="9"/>